<organism>
    <name type="scientific">Pongo abelii</name>
    <name type="common">Sumatran orangutan</name>
    <name type="synonym">Pongo pygmaeus abelii</name>
    <dbReference type="NCBI Taxonomy" id="9601"/>
    <lineage>
        <taxon>Eukaryota</taxon>
        <taxon>Metazoa</taxon>
        <taxon>Chordata</taxon>
        <taxon>Craniata</taxon>
        <taxon>Vertebrata</taxon>
        <taxon>Euteleostomi</taxon>
        <taxon>Mammalia</taxon>
        <taxon>Eutheria</taxon>
        <taxon>Euarchontoglires</taxon>
        <taxon>Primates</taxon>
        <taxon>Haplorrhini</taxon>
        <taxon>Catarrhini</taxon>
        <taxon>Hominidae</taxon>
        <taxon>Pongo</taxon>
    </lineage>
</organism>
<evidence type="ECO:0000250" key="1">
    <source>
        <dbReference type="UniProtKB" id="O75822"/>
    </source>
</evidence>
<evidence type="ECO:0000255" key="2">
    <source>
        <dbReference type="HAMAP-Rule" id="MF_03009"/>
    </source>
</evidence>
<evidence type="ECO:0000256" key="3">
    <source>
        <dbReference type="SAM" id="MobiDB-lite"/>
    </source>
</evidence>
<protein>
    <recommendedName>
        <fullName evidence="2">Eukaryotic translation initiation factor 3 subunit J</fullName>
        <shortName evidence="2">eIF3j</shortName>
    </recommendedName>
    <alternativeName>
        <fullName evidence="2">Eukaryotic translation initiation factor 3 subunit 1</fullName>
    </alternativeName>
    <alternativeName>
        <fullName evidence="2">eIF-3-alpha</fullName>
    </alternativeName>
    <alternativeName>
        <fullName evidence="2">eIF3 p35</fullName>
    </alternativeName>
</protein>
<accession>Q5R8D1</accession>
<sequence>MAAAAAAAAGDSDSWDADAFSVEDPVRKVGGGGTAGGDRWEGEDEDEDVKDNWDDDDDEKKEEAEVKPEVKISEKKKIAEKIKEKERQQKKRQEEIKKRLEEPEEPKVLTPEEQLADKLRLKKLQEESDLELAKETFGVNNTVYGIDAMNPSSRDDFTEFGKLLKDKITQYEKSLYYASFLEVLVRDVCISLEIDDLKKITNSLTVLCSEKQKQEKQSKAKKKKKGVVPGGGLKATMKDDLADYGGYDGGYVQDYEDFM</sequence>
<keyword id="KW-0175">Coiled coil</keyword>
<keyword id="KW-0963">Cytoplasm</keyword>
<keyword id="KW-0396">Initiation factor</keyword>
<keyword id="KW-1017">Isopeptide bond</keyword>
<keyword id="KW-0597">Phosphoprotein</keyword>
<keyword id="KW-0648">Protein biosynthesis</keyword>
<keyword id="KW-1185">Reference proteome</keyword>
<keyword id="KW-0832">Ubl conjugation</keyword>
<reference key="1">
    <citation type="submission" date="2004-11" db="EMBL/GenBank/DDBJ databases">
        <authorList>
            <consortium name="The German cDNA consortium"/>
        </authorList>
    </citation>
    <scope>NUCLEOTIDE SEQUENCE [LARGE SCALE MRNA]</scope>
    <source>
        <tissue>Kidney</tissue>
    </source>
</reference>
<proteinExistence type="evidence at transcript level"/>
<gene>
    <name evidence="2" type="primary">EIF3J</name>
    <name evidence="2" type="synonym">EIF3S1</name>
</gene>
<dbReference type="EMBL" id="CR859822">
    <property type="protein sequence ID" value="CAH91979.1"/>
    <property type="molecule type" value="mRNA"/>
</dbReference>
<dbReference type="RefSeq" id="NP_001126147.1">
    <property type="nucleotide sequence ID" value="NM_001132675.1"/>
</dbReference>
<dbReference type="SMR" id="Q5R8D1"/>
<dbReference type="FunCoup" id="Q5R8D1">
    <property type="interactions" value="1843"/>
</dbReference>
<dbReference type="STRING" id="9601.ENSPPYP00000007287"/>
<dbReference type="Ensembl" id="ENSPPYT00000007589.3">
    <property type="protein sequence ID" value="ENSPPYP00000007287.3"/>
    <property type="gene ID" value="ENSPPYG00000006431.3"/>
</dbReference>
<dbReference type="GeneID" id="100173106"/>
<dbReference type="KEGG" id="pon:100173106"/>
<dbReference type="CTD" id="8669"/>
<dbReference type="eggNOG" id="KOG4813">
    <property type="taxonomic scope" value="Eukaryota"/>
</dbReference>
<dbReference type="GeneTree" id="ENSGT00390000018400"/>
<dbReference type="InParanoid" id="Q5R8D1"/>
<dbReference type="OMA" id="KPHYALW"/>
<dbReference type="OrthoDB" id="20381at2759"/>
<dbReference type="Proteomes" id="UP000001595">
    <property type="component" value="Chromosome 15"/>
</dbReference>
<dbReference type="GO" id="GO:0005829">
    <property type="term" value="C:cytosol"/>
    <property type="evidence" value="ECO:0007669"/>
    <property type="project" value="Ensembl"/>
</dbReference>
<dbReference type="GO" id="GO:0016282">
    <property type="term" value="C:eukaryotic 43S preinitiation complex"/>
    <property type="evidence" value="ECO:0007669"/>
    <property type="project" value="UniProtKB-UniRule"/>
</dbReference>
<dbReference type="GO" id="GO:0033290">
    <property type="term" value="C:eukaryotic 48S preinitiation complex"/>
    <property type="evidence" value="ECO:0007669"/>
    <property type="project" value="UniProtKB-UniRule"/>
</dbReference>
<dbReference type="GO" id="GO:0005852">
    <property type="term" value="C:eukaryotic translation initiation factor 3 complex"/>
    <property type="evidence" value="ECO:0000250"/>
    <property type="project" value="UniProtKB"/>
</dbReference>
<dbReference type="GO" id="GO:0042802">
    <property type="term" value="F:identical protein binding"/>
    <property type="evidence" value="ECO:0007669"/>
    <property type="project" value="Ensembl"/>
</dbReference>
<dbReference type="GO" id="GO:0003743">
    <property type="term" value="F:translation initiation factor activity"/>
    <property type="evidence" value="ECO:0007669"/>
    <property type="project" value="UniProtKB-UniRule"/>
</dbReference>
<dbReference type="GO" id="GO:0001732">
    <property type="term" value="P:formation of cytoplasmic translation initiation complex"/>
    <property type="evidence" value="ECO:0007669"/>
    <property type="project" value="UniProtKB-UniRule"/>
</dbReference>
<dbReference type="FunFam" id="1.10.246.60:FF:000001">
    <property type="entry name" value="Eukaryotic translation initiation factor 3 subunit J"/>
    <property type="match status" value="1"/>
</dbReference>
<dbReference type="Gene3D" id="1.10.246.60">
    <property type="entry name" value="Eukaryotic translation initiation factor 3 like domains"/>
    <property type="match status" value="1"/>
</dbReference>
<dbReference type="HAMAP" id="MF_03009">
    <property type="entry name" value="eIF3j"/>
    <property type="match status" value="1"/>
</dbReference>
<dbReference type="InterPro" id="IPR023194">
    <property type="entry name" value="eIF3-like_dom_sf"/>
</dbReference>
<dbReference type="InterPro" id="IPR013906">
    <property type="entry name" value="eIF3j"/>
</dbReference>
<dbReference type="PANTHER" id="PTHR21681">
    <property type="entry name" value="EUKARYOTIC TRANSLATION INITIATION FACTOR 3 SUBUNIT J"/>
    <property type="match status" value="1"/>
</dbReference>
<dbReference type="PANTHER" id="PTHR21681:SF0">
    <property type="entry name" value="EUKARYOTIC TRANSLATION INITIATION FACTOR 3 SUBUNIT J"/>
    <property type="match status" value="1"/>
</dbReference>
<dbReference type="Pfam" id="PF08597">
    <property type="entry name" value="eIF3_subunit"/>
    <property type="match status" value="1"/>
</dbReference>
<comment type="function">
    <text evidence="2">Component of the eukaryotic translation initiation factor 3 (eIF-3) complex, which is required for several steps in the initiation of protein synthesis. The eIF-3 complex associates with the 40S ribosome and facilitates the recruitment of eIF-1, eIF-1A, eIF-2:GTP:methionyl-tRNAi and eIF-5 to form the 43S pre-initiation complex (43S PIC). The eIF-3 complex stimulates mRNA recruitment to the 43S PIC and scanning of the mRNA for AUG recognition. The eIF-3 complex is also required for disassembly and recycling of post-termination ribosomal complexes and subsequently prevents premature joining of the 40S and 60S ribosomal subunits prior to initiation. The eIF-3 complex specifically targets and initiates translation of a subset of mRNAs involved in cell proliferation, including cell cycling, differentiation and apoptosis, and uses different modes of RNA stem-loop binding to exert either translational activation or repression. This subunit binds directly within the mRNA entry channel of the 40S ribosome to the aminoacyl (A) site. It may regulate the interaction between the 43S PIC and mRNA.</text>
</comment>
<comment type="subunit">
    <text evidence="2">Component of the eukaryotic translation initiation factor 3 (eIF-3) complex, which is composed of 13 subunits: EIF3A, EIF3B, EIF3C, EIF3D, EIF3E, EIF3F, EIF3G, EIF3H, EIF3I, EIF3J, EIF3K, EIF3L and EIF3M. The eIF-3 complex appears to include 3 stable modules: module A is composed of EIF3A, EIF3B, EIF3G and EIF3I; module B is composed of EIF3F, EIF3H, and EIF3M; and module C is composed of EIF3C, EIF3D, EIF3E, EIF3K and EIF3L. EIF3C of module C binds EIF3B of module A and EIF3H of module B, thereby linking the three modules. EIF3J is a labile subunit that binds to the eIF-3 complex via EIF3B. The eIF-3 complex interacts with RPS6KB1 under conditions of nutrient depletion. Mitogenic stimulation leads to binding and activation of a complex composed of MTOR and RPTOR, leading to phosphorylation and release of RPS6KB1 and binding of EIF4B to eIF-3.</text>
</comment>
<comment type="subcellular location">
    <subcellularLocation>
        <location evidence="2">Cytoplasm</location>
    </subcellularLocation>
</comment>
<comment type="PTM">
    <text evidence="2">Phosphorylated. Phosphorylation is enhanced upon serum stimulation.</text>
</comment>
<comment type="similarity">
    <text evidence="2">Belongs to the eIF-3 subunit J family.</text>
</comment>
<name>EIF3J_PONAB</name>
<feature type="chain" id="PRO_0000123508" description="Eukaryotic translation initiation factor 3 subunit J">
    <location>
        <begin position="1"/>
        <end position="259"/>
    </location>
</feature>
<feature type="region of interest" description="Disordered" evidence="3">
    <location>
        <begin position="1"/>
        <end position="111"/>
    </location>
</feature>
<feature type="region of interest" description="Sufficient for interaction with EIF3B" evidence="2">
    <location>
        <begin position="1"/>
        <end position="70"/>
    </location>
</feature>
<feature type="region of interest" description="Disordered" evidence="3">
    <location>
        <begin position="218"/>
        <end position="247"/>
    </location>
</feature>
<feature type="region of interest" description="Promotes stable association with the 40S ribosome" evidence="2">
    <location>
        <begin position="244"/>
        <end position="259"/>
    </location>
</feature>
<feature type="coiled-coil region" evidence="2">
    <location>
        <begin position="71"/>
        <end position="136"/>
    </location>
</feature>
<feature type="compositionally biased region" description="Low complexity" evidence="3">
    <location>
        <begin position="1"/>
        <end position="12"/>
    </location>
</feature>
<feature type="compositionally biased region" description="Acidic residues" evidence="3">
    <location>
        <begin position="41"/>
        <end position="60"/>
    </location>
</feature>
<feature type="compositionally biased region" description="Basic and acidic residues" evidence="3">
    <location>
        <begin position="61"/>
        <end position="107"/>
    </location>
</feature>
<feature type="modified residue" description="Phosphoserine" evidence="1 2">
    <location>
        <position position="12"/>
    </location>
</feature>
<feature type="modified residue" description="Phosphoserine" evidence="1 2">
    <location>
        <position position="14"/>
    </location>
</feature>
<feature type="modified residue" description="Phosphoserine" evidence="1 2">
    <location>
        <position position="21"/>
    </location>
</feature>
<feature type="modified residue" description="Phosphothreonine" evidence="1 2">
    <location>
        <position position="110"/>
    </location>
</feature>
<feature type="modified residue" description="Phosphoserine" evidence="1 2">
    <location>
        <position position="128"/>
    </location>
</feature>
<feature type="modified residue" description="Phosphotyrosine" evidence="1">
    <location>
        <position position="255"/>
    </location>
</feature>
<feature type="cross-link" description="Glycyl lysine isopeptide (Lys-Gly) (interchain with G-Cter in SUMO2)" evidence="1">
    <location>
        <position position="107"/>
    </location>
</feature>